<comment type="function">
    <text evidence="1">Catalyzes the NADPH-dependent reduction of L-glutamate 5-phosphate into L-glutamate 5-semialdehyde and phosphate. The product spontaneously undergoes cyclization to form 1-pyrroline-5-carboxylate.</text>
</comment>
<comment type="catalytic activity">
    <reaction evidence="1">
        <text>L-glutamate 5-semialdehyde + phosphate + NADP(+) = L-glutamyl 5-phosphate + NADPH + H(+)</text>
        <dbReference type="Rhea" id="RHEA:19541"/>
        <dbReference type="ChEBI" id="CHEBI:15378"/>
        <dbReference type="ChEBI" id="CHEBI:43474"/>
        <dbReference type="ChEBI" id="CHEBI:57783"/>
        <dbReference type="ChEBI" id="CHEBI:58066"/>
        <dbReference type="ChEBI" id="CHEBI:58274"/>
        <dbReference type="ChEBI" id="CHEBI:58349"/>
        <dbReference type="EC" id="1.2.1.41"/>
    </reaction>
</comment>
<comment type="pathway">
    <text evidence="1">Amino-acid biosynthesis; L-proline biosynthesis; L-glutamate 5-semialdehyde from L-glutamate: step 2/2.</text>
</comment>
<comment type="subcellular location">
    <subcellularLocation>
        <location evidence="1">Cytoplasm</location>
    </subcellularLocation>
</comment>
<comment type="similarity">
    <text evidence="1">Belongs to the gamma-glutamyl phosphate reductase family.</text>
</comment>
<dbReference type="EC" id="1.2.1.41" evidence="1"/>
<dbReference type="EMBL" id="CP000140">
    <property type="protein sequence ID" value="ABR43988.1"/>
    <property type="molecule type" value="Genomic_DNA"/>
</dbReference>
<dbReference type="RefSeq" id="WP_011966792.1">
    <property type="nucleotide sequence ID" value="NC_009615.1"/>
</dbReference>
<dbReference type="SMR" id="A6LE74"/>
<dbReference type="STRING" id="435591.BDI_2257"/>
<dbReference type="PaxDb" id="435591-BDI_2257"/>
<dbReference type="KEGG" id="pdi:BDI_2257"/>
<dbReference type="PATRIC" id="fig|435591.13.peg.2242"/>
<dbReference type="eggNOG" id="COG0014">
    <property type="taxonomic scope" value="Bacteria"/>
</dbReference>
<dbReference type="HOGENOM" id="CLU_030231_0_0_10"/>
<dbReference type="BioCyc" id="PDIS435591:G1G5A-2320-MONOMER"/>
<dbReference type="UniPathway" id="UPA00098">
    <property type="reaction ID" value="UER00360"/>
</dbReference>
<dbReference type="Proteomes" id="UP000000566">
    <property type="component" value="Chromosome"/>
</dbReference>
<dbReference type="GO" id="GO:0005737">
    <property type="term" value="C:cytoplasm"/>
    <property type="evidence" value="ECO:0007669"/>
    <property type="project" value="UniProtKB-SubCell"/>
</dbReference>
<dbReference type="GO" id="GO:0004350">
    <property type="term" value="F:glutamate-5-semialdehyde dehydrogenase activity"/>
    <property type="evidence" value="ECO:0007669"/>
    <property type="project" value="UniProtKB-UniRule"/>
</dbReference>
<dbReference type="GO" id="GO:0050661">
    <property type="term" value="F:NADP binding"/>
    <property type="evidence" value="ECO:0007669"/>
    <property type="project" value="InterPro"/>
</dbReference>
<dbReference type="GO" id="GO:0055129">
    <property type="term" value="P:L-proline biosynthetic process"/>
    <property type="evidence" value="ECO:0007669"/>
    <property type="project" value="UniProtKB-UniRule"/>
</dbReference>
<dbReference type="CDD" id="cd07079">
    <property type="entry name" value="ALDH_F18-19_ProA-GPR"/>
    <property type="match status" value="1"/>
</dbReference>
<dbReference type="Gene3D" id="3.40.605.10">
    <property type="entry name" value="Aldehyde Dehydrogenase, Chain A, domain 1"/>
    <property type="match status" value="1"/>
</dbReference>
<dbReference type="Gene3D" id="3.40.309.10">
    <property type="entry name" value="Aldehyde Dehydrogenase, Chain A, domain 2"/>
    <property type="match status" value="1"/>
</dbReference>
<dbReference type="HAMAP" id="MF_00412">
    <property type="entry name" value="ProA"/>
    <property type="match status" value="1"/>
</dbReference>
<dbReference type="InterPro" id="IPR016161">
    <property type="entry name" value="Ald_DH/histidinol_DH"/>
</dbReference>
<dbReference type="InterPro" id="IPR016163">
    <property type="entry name" value="Ald_DH_C"/>
</dbReference>
<dbReference type="InterPro" id="IPR016162">
    <property type="entry name" value="Ald_DH_N"/>
</dbReference>
<dbReference type="InterPro" id="IPR012134">
    <property type="entry name" value="Glu-5-SA_DH"/>
</dbReference>
<dbReference type="InterPro" id="IPR000965">
    <property type="entry name" value="GPR_dom"/>
</dbReference>
<dbReference type="NCBIfam" id="NF001221">
    <property type="entry name" value="PRK00197.1"/>
    <property type="match status" value="1"/>
</dbReference>
<dbReference type="NCBIfam" id="TIGR00407">
    <property type="entry name" value="proA"/>
    <property type="match status" value="1"/>
</dbReference>
<dbReference type="PANTHER" id="PTHR11063:SF8">
    <property type="entry name" value="DELTA-1-PYRROLINE-5-CARBOXYLATE SYNTHASE"/>
    <property type="match status" value="1"/>
</dbReference>
<dbReference type="PANTHER" id="PTHR11063">
    <property type="entry name" value="GLUTAMATE SEMIALDEHYDE DEHYDROGENASE"/>
    <property type="match status" value="1"/>
</dbReference>
<dbReference type="PIRSF" id="PIRSF000151">
    <property type="entry name" value="GPR"/>
    <property type="match status" value="1"/>
</dbReference>
<dbReference type="SUPFAM" id="SSF53720">
    <property type="entry name" value="ALDH-like"/>
    <property type="match status" value="1"/>
</dbReference>
<evidence type="ECO:0000255" key="1">
    <source>
        <dbReference type="HAMAP-Rule" id="MF_00412"/>
    </source>
</evidence>
<reference key="1">
    <citation type="journal article" date="2007" name="PLoS Biol.">
        <title>Evolution of symbiotic bacteria in the distal human intestine.</title>
        <authorList>
            <person name="Xu J."/>
            <person name="Mahowald M.A."/>
            <person name="Ley R.E."/>
            <person name="Lozupone C.A."/>
            <person name="Hamady M."/>
            <person name="Martens E.C."/>
            <person name="Henrissat B."/>
            <person name="Coutinho P.M."/>
            <person name="Minx P."/>
            <person name="Latreille P."/>
            <person name="Cordum H."/>
            <person name="Van Brunt A."/>
            <person name="Kim K."/>
            <person name="Fulton R.S."/>
            <person name="Fulton L.A."/>
            <person name="Clifton S.W."/>
            <person name="Wilson R.K."/>
            <person name="Knight R.D."/>
            <person name="Gordon J.I."/>
        </authorList>
    </citation>
    <scope>NUCLEOTIDE SEQUENCE [LARGE SCALE GENOMIC DNA]</scope>
    <source>
        <strain>ATCC 8503 / DSM 20701 / CIP 104284 / JCM 5825 / NCTC 11152</strain>
    </source>
</reference>
<protein>
    <recommendedName>
        <fullName evidence="1">Gamma-glutamyl phosphate reductase</fullName>
        <shortName evidence="1">GPR</shortName>
        <ecNumber evidence="1">1.2.1.41</ecNumber>
    </recommendedName>
    <alternativeName>
        <fullName evidence="1">Glutamate-5-semialdehyde dehydrogenase</fullName>
    </alternativeName>
    <alternativeName>
        <fullName evidence="1">Glutamyl-gamma-semialdehyde dehydrogenase</fullName>
        <shortName evidence="1">GSA dehydrogenase</shortName>
    </alternativeName>
</protein>
<proteinExistence type="inferred from homology"/>
<gene>
    <name evidence="1" type="primary">proA</name>
    <name type="ordered locus">BDI_2257</name>
</gene>
<feature type="chain" id="PRO_0000340900" description="Gamma-glutamyl phosphate reductase">
    <location>
        <begin position="1"/>
        <end position="415"/>
    </location>
</feature>
<name>PROA_PARD8</name>
<accession>A6LE74</accession>
<sequence length="415" mass="45817">MNVKDMLRQASDAAKQLITLSDQTIIGILKETAQVLRTHTEEVLAANRQDLERMDPANPKYDRLKLTEERLQGIAADMENVSTLPSPLNKVLSETIRPNGMVIRKVTVPFGVIGVIYEARPNVTFDVFSLCFRSGNACVLKGGSDADFSNRALVRIIHSVLERQGINPAVCTLLPPDREATAELLGAVGLVDLIIPRGSSSLIHFVREHAKVPVIETGAGICHTYFDRSGDKGKGREIVNNAKTRRVSVCNALDCLIIHRERLSDLPYICEKLPDSNVIIYADEPAYAALSEHYPETLLQQANENSFGTEFLDYKMSIRTVSSLDEVLSHIARYSSKHSESIISEDPETIRRFQQLVDAACVYANVSTAFTDGAQFGFGAEIGISTQKLHARGPMALPELTTYKYIIEGDGQTRI</sequence>
<organism>
    <name type="scientific">Parabacteroides distasonis (strain ATCC 8503 / DSM 20701 / CIP 104284 / JCM 5825 / NCTC 11152)</name>
    <dbReference type="NCBI Taxonomy" id="435591"/>
    <lineage>
        <taxon>Bacteria</taxon>
        <taxon>Pseudomonadati</taxon>
        <taxon>Bacteroidota</taxon>
        <taxon>Bacteroidia</taxon>
        <taxon>Bacteroidales</taxon>
        <taxon>Tannerellaceae</taxon>
        <taxon>Parabacteroides</taxon>
    </lineage>
</organism>
<keyword id="KW-0028">Amino-acid biosynthesis</keyword>
<keyword id="KW-0963">Cytoplasm</keyword>
<keyword id="KW-0521">NADP</keyword>
<keyword id="KW-0560">Oxidoreductase</keyword>
<keyword id="KW-0641">Proline biosynthesis</keyword>
<keyword id="KW-1185">Reference proteome</keyword>